<sequence>MTQITEKELKKKYLDLLSQNFDTPEKLATEIINLESILELPKGTEHFVSDLHGEYEAFQHVLRNGSGNVRAKINDIFKERLSTKELNDLTALVYYPEDKLKLIKSDFQSCGQLNVWYITTIEHLIELIKYCSSKYTRSKLRKALPKQYVYIIEELLYKSNEYQNKKSYYETLVNQVIELKQADDLIIGLAYSVQRLVVDHLHVVGDIYDRGPQPDKIMDTLINYHSLDIQWGNHDVLWVGAYAGSKVCLANLLRICARYDNLDIIEDAYGINLRPLLTLAEKYYDADNPAFKPKKRPDKHERLTQREESQITKIHQAIAMIQFKLEIPIIKRRPNFEMEERLVLEKVNYDTNEITVYGNTYPLKDTCFQTINRNNPAELLPEEEEVMNKLLLSFQQSEKLRRHMSFLMRKGSLYLPYNGNLLIHGCIPVDENGEMESFEIDGHTYSGQELLDVFEYHVRKSFDEKENTDDLSTDLVWYLWTGKYSSLFGKRAMTTFERYFIADKASHKEEKNPYYHLREDVNMVRKMLSDFGLNPDEGRIINGHTPVKEINGEDPIKADGKMLVIDGGFSKAYQSTTGIAGYTLLYNSFGMQLVAHQQFNAKEKILSEGIDELSIKRVVDKELQRKKIRDTNIGKELQAQIDILKMLMHDRYLD</sequence>
<comment type="catalytic activity">
    <reaction evidence="1">
        <text>beta-D-fructose 1,6-bisphosphate + H2O = beta-D-fructose 6-phosphate + phosphate</text>
        <dbReference type="Rhea" id="RHEA:11064"/>
        <dbReference type="ChEBI" id="CHEBI:15377"/>
        <dbReference type="ChEBI" id="CHEBI:32966"/>
        <dbReference type="ChEBI" id="CHEBI:43474"/>
        <dbReference type="ChEBI" id="CHEBI:57634"/>
        <dbReference type="EC" id="3.1.3.11"/>
    </reaction>
</comment>
<comment type="cofactor">
    <cofactor evidence="1">
        <name>Mn(2+)</name>
        <dbReference type="ChEBI" id="CHEBI:29035"/>
    </cofactor>
</comment>
<comment type="pathway">
    <text evidence="1">Carbohydrate biosynthesis; gluconeogenesis.</text>
</comment>
<comment type="similarity">
    <text evidence="1">Belongs to the FBPase class 3 family.</text>
</comment>
<name>F16PC_STAA9</name>
<dbReference type="EC" id="3.1.3.11" evidence="1"/>
<dbReference type="EMBL" id="CP000703">
    <property type="protein sequence ID" value="ABQ50316.1"/>
    <property type="molecule type" value="Genomic_DNA"/>
</dbReference>
<dbReference type="RefSeq" id="WP_000192172.1">
    <property type="nucleotide sequence ID" value="NC_009487.1"/>
</dbReference>
<dbReference type="KEGG" id="saj:SaurJH9_2539"/>
<dbReference type="HOGENOM" id="CLU_028392_2_0_9"/>
<dbReference type="UniPathway" id="UPA00138"/>
<dbReference type="GO" id="GO:0042132">
    <property type="term" value="F:fructose 1,6-bisphosphate 1-phosphatase activity"/>
    <property type="evidence" value="ECO:0007669"/>
    <property type="project" value="UniProtKB-UniRule"/>
</dbReference>
<dbReference type="GO" id="GO:0006094">
    <property type="term" value="P:gluconeogenesis"/>
    <property type="evidence" value="ECO:0007669"/>
    <property type="project" value="UniProtKB-UniRule"/>
</dbReference>
<dbReference type="Gene3D" id="3.60.21.10">
    <property type="match status" value="1"/>
</dbReference>
<dbReference type="HAMAP" id="MF_01854">
    <property type="entry name" value="FBPase_class3"/>
    <property type="match status" value="1"/>
</dbReference>
<dbReference type="InterPro" id="IPR009164">
    <property type="entry name" value="FBPtase_class3"/>
</dbReference>
<dbReference type="InterPro" id="IPR029052">
    <property type="entry name" value="Metallo-depent_PP-like"/>
</dbReference>
<dbReference type="Pfam" id="PF06874">
    <property type="entry name" value="FBPase_2"/>
    <property type="match status" value="1"/>
</dbReference>
<dbReference type="PIRSF" id="PIRSF000906">
    <property type="entry name" value="FBPtase_Bacill"/>
    <property type="match status" value="1"/>
</dbReference>
<dbReference type="SUPFAM" id="SSF56300">
    <property type="entry name" value="Metallo-dependent phosphatases"/>
    <property type="match status" value="2"/>
</dbReference>
<organism>
    <name type="scientific">Staphylococcus aureus (strain JH9)</name>
    <dbReference type="NCBI Taxonomy" id="359786"/>
    <lineage>
        <taxon>Bacteria</taxon>
        <taxon>Bacillati</taxon>
        <taxon>Bacillota</taxon>
        <taxon>Bacilli</taxon>
        <taxon>Bacillales</taxon>
        <taxon>Staphylococcaceae</taxon>
        <taxon>Staphylococcus</taxon>
    </lineage>
</organism>
<protein>
    <recommendedName>
        <fullName evidence="1">Fructose-1,6-bisphosphatase class 3</fullName>
        <shortName evidence="1">FBPase class 3</shortName>
        <ecNumber evidence="1">3.1.3.11</ecNumber>
    </recommendedName>
    <alternativeName>
        <fullName evidence="1">D-fructose-1,6-bisphosphate 1-phosphohydrolase class 3</fullName>
    </alternativeName>
</protein>
<feature type="chain" id="PRO_0000359985" description="Fructose-1,6-bisphosphatase class 3">
    <location>
        <begin position="1"/>
        <end position="654"/>
    </location>
</feature>
<feature type="region of interest" description="Disordered" evidence="2">
    <location>
        <begin position="288"/>
        <end position="307"/>
    </location>
</feature>
<feature type="compositionally biased region" description="Basic and acidic residues" evidence="2">
    <location>
        <begin position="298"/>
        <end position="307"/>
    </location>
</feature>
<keyword id="KW-0119">Carbohydrate metabolism</keyword>
<keyword id="KW-0378">Hydrolase</keyword>
<keyword id="KW-0464">Manganese</keyword>
<accession>A5IVU3</accession>
<proteinExistence type="inferred from homology"/>
<evidence type="ECO:0000255" key="1">
    <source>
        <dbReference type="HAMAP-Rule" id="MF_01854"/>
    </source>
</evidence>
<evidence type="ECO:0000256" key="2">
    <source>
        <dbReference type="SAM" id="MobiDB-lite"/>
    </source>
</evidence>
<gene>
    <name evidence="1" type="primary">fbp</name>
    <name type="ordered locus">SaurJH9_2539</name>
</gene>
<reference key="1">
    <citation type="submission" date="2007-05" db="EMBL/GenBank/DDBJ databases">
        <title>Complete sequence of chromosome of Staphylococcus aureus subsp. aureus JH9.</title>
        <authorList>
            <consortium name="US DOE Joint Genome Institute"/>
            <person name="Copeland A."/>
            <person name="Lucas S."/>
            <person name="Lapidus A."/>
            <person name="Barry K."/>
            <person name="Detter J.C."/>
            <person name="Glavina del Rio T."/>
            <person name="Hammon N."/>
            <person name="Israni S."/>
            <person name="Pitluck S."/>
            <person name="Chain P."/>
            <person name="Malfatti S."/>
            <person name="Shin M."/>
            <person name="Vergez L."/>
            <person name="Schmutz J."/>
            <person name="Larimer F."/>
            <person name="Land M."/>
            <person name="Hauser L."/>
            <person name="Kyrpides N."/>
            <person name="Kim E."/>
            <person name="Tomasz A."/>
            <person name="Richardson P."/>
        </authorList>
    </citation>
    <scope>NUCLEOTIDE SEQUENCE [LARGE SCALE GENOMIC DNA]</scope>
    <source>
        <strain>JH9</strain>
    </source>
</reference>